<proteinExistence type="inferred from homology"/>
<reference key="1">
    <citation type="journal article" date="1990" name="J. Mol. Biol.">
        <title>DNA replication studies with coliphage 186. III. A single phage gene is required for phage 186 replication.</title>
        <authorList>
            <person name="Sivaprasad A.V."/>
            <person name="Jarvinen R."/>
            <person name="Puspurs A."/>
            <person name="Egan J.B."/>
        </authorList>
    </citation>
    <scope>NUCLEOTIDE SEQUENCE [GENOMIC DNA]</scope>
    <source>
        <strain>186CITSP</strain>
    </source>
</reference>
<name>VPA_BP186</name>
<organismHost>
    <name type="scientific">Escherichia coli</name>
    <dbReference type="NCBI Taxonomy" id="562"/>
</organismHost>
<accession>P41064</accession>
<feature type="chain" id="PRO_0000165297" description="Replication gene A protein">
    <location>
        <begin position="1"/>
        <end position="694"/>
    </location>
</feature>
<feature type="region of interest" description="Disordered" evidence="2">
    <location>
        <begin position="605"/>
        <end position="659"/>
    </location>
</feature>
<feature type="region of interest" description="Disordered" evidence="2">
    <location>
        <begin position="672"/>
        <end position="694"/>
    </location>
</feature>
<feature type="compositionally biased region" description="Polar residues" evidence="2">
    <location>
        <begin position="609"/>
        <end position="621"/>
    </location>
</feature>
<feature type="compositionally biased region" description="Basic and acidic residues" evidence="2">
    <location>
        <begin position="634"/>
        <end position="643"/>
    </location>
</feature>
<feature type="compositionally biased region" description="Basic residues" evidence="2">
    <location>
        <begin position="644"/>
        <end position="657"/>
    </location>
</feature>
<feature type="active site" description="O-(5'-phospho-DNA)-tyrosine intermediate" evidence="1">
    <location>
        <position position="442"/>
    </location>
</feature>
<feature type="active site" description="O-(5'-phospho-DNA)-tyrosine intermediate" evidence="1">
    <location>
        <position position="446"/>
    </location>
</feature>
<organism>
    <name type="scientific">Escherichia phage 186</name>
    <name type="common">Bacteriophage 186</name>
    <dbReference type="NCBI Taxonomy" id="29252"/>
    <lineage>
        <taxon>Viruses</taxon>
        <taxon>Duplodnaviria</taxon>
        <taxon>Heunggongvirae</taxon>
        <taxon>Uroviricota</taxon>
        <taxon>Caudoviricetes</taxon>
        <taxon>Peduoviridae</taxon>
        <taxon>Eganvirus</taxon>
    </lineage>
</organism>
<protein>
    <recommendedName>
        <fullName>Replication gene A protein</fullName>
        <ecNumber>3.1.-.-</ecNumber>
    </recommendedName>
    <alternativeName>
        <fullName>GpA</fullName>
    </alternativeName>
</protein>
<dbReference type="EC" id="3.1.-.-"/>
<dbReference type="EMBL" id="U32222">
    <property type="protein sequence ID" value="AAC34186.1"/>
    <property type="molecule type" value="Genomic_DNA"/>
</dbReference>
<dbReference type="PIR" id="S10632">
    <property type="entry name" value="S10632"/>
</dbReference>
<dbReference type="RefSeq" id="NP_052289.1">
    <property type="nucleotide sequence ID" value="NC_001317.1"/>
</dbReference>
<dbReference type="GeneID" id="1262442"/>
<dbReference type="KEGG" id="vg:1262442"/>
<dbReference type="OrthoDB" id="457at10239"/>
<dbReference type="Proteomes" id="UP000000369">
    <property type="component" value="Segment"/>
</dbReference>
<dbReference type="GO" id="GO:0004519">
    <property type="term" value="F:endonuclease activity"/>
    <property type="evidence" value="ECO:0007669"/>
    <property type="project" value="UniProtKB-KW"/>
</dbReference>
<dbReference type="GO" id="GO:0006260">
    <property type="term" value="P:DNA replication"/>
    <property type="evidence" value="ECO:0007669"/>
    <property type="project" value="UniProtKB-KW"/>
</dbReference>
<dbReference type="GO" id="GO:0039693">
    <property type="term" value="P:viral DNA genome replication"/>
    <property type="evidence" value="ECO:0007669"/>
    <property type="project" value="UniProtKB-KW"/>
</dbReference>
<dbReference type="InterPro" id="IPR008766">
    <property type="entry name" value="Replication_gene_A-like"/>
</dbReference>
<dbReference type="Pfam" id="PF05840">
    <property type="entry name" value="Phage_GPA"/>
    <property type="match status" value="1"/>
</dbReference>
<sequence length="694" mass="79580">MTGVVYAFPWNAPRSAIASSYLTYDQQHRRDRMFAALLHARKVLFLQPECVRFDVYRTAAVLEQNQGSQRANAFLISFCKKALPRLELVAKKYECSGINSNVSAAVFDGHFDTQLMQYLASRMVNMVARFNRLPDMSRADIDLLAADIANFIRAELADIDDTGFSELKTLYTWYMRAGFISLQFNVTPPKWERVTKKYFCEDEIAPAVMRMFNEVWWRGRLRRIAAAWREHLQIAVGNVSKKRHAYASKNCVTDWREQKRRTREFLKGLDLEDEEGNRISLIEKYDGSVANPAIRRCELMARIRGFENICNELGYVGEFYTLTAPSKYHATTKAGYRNSKWNGASPSDTQSYLTGLWARIRAKLHREEIRIFGIRVAEPHHDGTPHWHMLMFMLPEDVERVRLIIRDYAWEEDHYELRSDKAKKARFHAEAIDPEKGSATGYVAKYISKNIDGYALDGETDDESGELLKETAPAVSAWAARWHIRQFQFIGGAPVTVYRELRRMADPETARALSVEFAAVHDAAHYGRWADYVNAQGGPFVRRDDLQVRTLYEPRTEFNQYGEETVCIKGVYDASIGAGSPILTRLTQWKIVPKRAVDLAVDVKGASAPSRSSVNNCTGSESDPPILDLTKPLSRRERRELTNRLRKKKPTTRRKFIHGTDKQNVAITKTIDEIHSDNRHHNQPGRSPAPDGRW</sequence>
<keyword id="KW-0190">Covalent protein-DNA linkage</keyword>
<keyword id="KW-0235">DNA replication</keyword>
<keyword id="KW-0244">Early protein</keyword>
<keyword id="KW-0255">Endonuclease</keyword>
<keyword id="KW-0378">Hydrolase</keyword>
<keyword id="KW-0540">Nuclease</keyword>
<keyword id="KW-1185">Reference proteome</keyword>
<keyword id="KW-1194">Viral DNA replication</keyword>
<comment type="function">
    <text>Endonuclease which induces a single-strand cut at or near ori. May act by forming a covalent link to the 5'side of the nick.</text>
</comment>
<comment type="similarity">
    <text evidence="3">Belongs to the phage GPA family.</text>
</comment>
<gene>
    <name type="primary">A</name>
    <name type="synonym">CP87</name>
</gene>
<evidence type="ECO:0000250" key="1"/>
<evidence type="ECO:0000256" key="2">
    <source>
        <dbReference type="SAM" id="MobiDB-lite"/>
    </source>
</evidence>
<evidence type="ECO:0000305" key="3"/>